<accession>Q38Y03</accession>
<name>Y622_LATSS</name>
<organism>
    <name type="scientific">Latilactobacillus sakei subsp. sakei (strain 23K)</name>
    <name type="common">Lactobacillus sakei subsp. sakei</name>
    <dbReference type="NCBI Taxonomy" id="314315"/>
    <lineage>
        <taxon>Bacteria</taxon>
        <taxon>Bacillati</taxon>
        <taxon>Bacillota</taxon>
        <taxon>Bacilli</taxon>
        <taxon>Lactobacillales</taxon>
        <taxon>Lactobacillaceae</taxon>
        <taxon>Latilactobacillus</taxon>
    </lineage>
</organism>
<feature type="chain" id="PRO_0000292735" description="UPF0342 protein LCA_0622">
    <location>
        <begin position="1"/>
        <end position="114"/>
    </location>
</feature>
<keyword id="KW-1185">Reference proteome</keyword>
<proteinExistence type="inferred from homology"/>
<comment type="similarity">
    <text evidence="1">Belongs to the UPF0342 family.</text>
</comment>
<reference key="1">
    <citation type="journal article" date="2005" name="Nat. Biotechnol.">
        <title>The complete genome sequence of the meat-borne lactic acid bacterium Lactobacillus sakei 23K.</title>
        <authorList>
            <person name="Chaillou S."/>
            <person name="Champomier-Verges M.-C."/>
            <person name="Cornet M."/>
            <person name="Crutz-Le Coq A.-M."/>
            <person name="Dudez A.-M."/>
            <person name="Martin V."/>
            <person name="Beaufils S."/>
            <person name="Darbon-Rongere E."/>
            <person name="Bossy R."/>
            <person name="Loux V."/>
            <person name="Zagorec M."/>
        </authorList>
    </citation>
    <scope>NUCLEOTIDE SEQUENCE [LARGE SCALE GENOMIC DNA]</scope>
    <source>
        <strain>23K</strain>
    </source>
</reference>
<gene>
    <name type="ordered locus">LCA_0622</name>
</gene>
<evidence type="ECO:0000255" key="1">
    <source>
        <dbReference type="HAMAP-Rule" id="MF_01526"/>
    </source>
</evidence>
<dbReference type="EMBL" id="CR936503">
    <property type="protein sequence ID" value="CAI54926.1"/>
    <property type="molecule type" value="Genomic_DNA"/>
</dbReference>
<dbReference type="RefSeq" id="WP_011374331.1">
    <property type="nucleotide sequence ID" value="NC_007576.1"/>
</dbReference>
<dbReference type="SMR" id="Q38Y03"/>
<dbReference type="STRING" id="314315.LCA_0622"/>
<dbReference type="GeneID" id="57133478"/>
<dbReference type="KEGG" id="lsa:LCA_0622"/>
<dbReference type="eggNOG" id="COG3679">
    <property type="taxonomic scope" value="Bacteria"/>
</dbReference>
<dbReference type="HOGENOM" id="CLU_140243_3_1_9"/>
<dbReference type="OrthoDB" id="9811402at2"/>
<dbReference type="Proteomes" id="UP000002707">
    <property type="component" value="Chromosome"/>
</dbReference>
<dbReference type="Gene3D" id="1.20.1500.10">
    <property type="entry name" value="YheA/YmcA-like"/>
    <property type="match status" value="1"/>
</dbReference>
<dbReference type="HAMAP" id="MF_01526">
    <property type="entry name" value="UPF0342"/>
    <property type="match status" value="1"/>
</dbReference>
<dbReference type="InterPro" id="IPR010368">
    <property type="entry name" value="Com_YlbF"/>
</dbReference>
<dbReference type="InterPro" id="IPR023378">
    <property type="entry name" value="YheA/YmcA-like_dom_sf"/>
</dbReference>
<dbReference type="Pfam" id="PF06133">
    <property type="entry name" value="Com_YlbF"/>
    <property type="match status" value="1"/>
</dbReference>
<dbReference type="SUPFAM" id="SSF158622">
    <property type="entry name" value="YheA/YmcA-like"/>
    <property type="match status" value="1"/>
</dbReference>
<sequence length="114" mass="13129">MTVNIYDDANQMATNLQTLPQFLGLQNAFAALKKDDIAFTMFKKFQTQQMTLQQKQMQGEELTDDEIQEIQELAQKIGDIDAIKNLMEQERQLSQLMDELNQIISKPIADIYQG</sequence>
<protein>
    <recommendedName>
        <fullName evidence="1">UPF0342 protein LCA_0622</fullName>
    </recommendedName>
</protein>